<gene>
    <name evidence="1" type="primary">obg</name>
    <name type="ordered locus">TC_0699</name>
</gene>
<sequence length="335" mass="36766">MFVDQITLELRAGKGGNGVVAWRKEKYLPKGGPYGGNGGNGGSILIEAVTNMYSFEEYRNLRFLKAGDGQAGASNNRTGKNGKDFVLKVPEGTLLRDAETGELIHDFTKDGERIVVCQGGRGGKGNVFFKTSTNRAPTKATPGKPGEIRLVELELKLIADIGLVGFPNAGKSTLFNTLARTEVKVGAYPFTTLHPSLGLVHQEGYLYQKPWIMADIPGIIEGASQNRGLGLDFLRHIERTRLLLFVVDISGIERSSPEKDLQILIGELLAYKEDLKNKSMVIALNKIDQLLPDEREERLALLKQQFPDQEFILLSGLTGEGVDVLHDLFKSKLSE</sequence>
<keyword id="KW-0963">Cytoplasm</keyword>
<keyword id="KW-0342">GTP-binding</keyword>
<keyword id="KW-0378">Hydrolase</keyword>
<keyword id="KW-0460">Magnesium</keyword>
<keyword id="KW-0479">Metal-binding</keyword>
<keyword id="KW-0547">Nucleotide-binding</keyword>
<name>OBG_CHLMU</name>
<organism>
    <name type="scientific">Chlamydia muridarum (strain MoPn / Nigg)</name>
    <dbReference type="NCBI Taxonomy" id="243161"/>
    <lineage>
        <taxon>Bacteria</taxon>
        <taxon>Pseudomonadati</taxon>
        <taxon>Chlamydiota</taxon>
        <taxon>Chlamydiia</taxon>
        <taxon>Chlamydiales</taxon>
        <taxon>Chlamydiaceae</taxon>
        <taxon>Chlamydia/Chlamydophila group</taxon>
        <taxon>Chlamydia</taxon>
    </lineage>
</organism>
<feature type="chain" id="PRO_0000385813" description="GTPase Obg">
    <location>
        <begin position="1"/>
        <end position="335"/>
    </location>
</feature>
<feature type="domain" description="Obg" evidence="2">
    <location>
        <begin position="1"/>
        <end position="158"/>
    </location>
</feature>
<feature type="domain" description="OBG-type G" evidence="1">
    <location>
        <begin position="159"/>
        <end position="334"/>
    </location>
</feature>
<feature type="binding site" evidence="1">
    <location>
        <begin position="165"/>
        <end position="172"/>
    </location>
    <ligand>
        <name>GTP</name>
        <dbReference type="ChEBI" id="CHEBI:37565"/>
    </ligand>
</feature>
<feature type="binding site" evidence="1">
    <location>
        <position position="172"/>
    </location>
    <ligand>
        <name>Mg(2+)</name>
        <dbReference type="ChEBI" id="CHEBI:18420"/>
    </ligand>
</feature>
<feature type="binding site" evidence="1">
    <location>
        <begin position="190"/>
        <end position="194"/>
    </location>
    <ligand>
        <name>GTP</name>
        <dbReference type="ChEBI" id="CHEBI:37565"/>
    </ligand>
</feature>
<feature type="binding site" evidence="1">
    <location>
        <position position="192"/>
    </location>
    <ligand>
        <name>Mg(2+)</name>
        <dbReference type="ChEBI" id="CHEBI:18420"/>
    </ligand>
</feature>
<feature type="binding site" evidence="1">
    <location>
        <begin position="215"/>
        <end position="218"/>
    </location>
    <ligand>
        <name>GTP</name>
        <dbReference type="ChEBI" id="CHEBI:37565"/>
    </ligand>
</feature>
<feature type="binding site" evidence="1">
    <location>
        <begin position="285"/>
        <end position="288"/>
    </location>
    <ligand>
        <name>GTP</name>
        <dbReference type="ChEBI" id="CHEBI:37565"/>
    </ligand>
</feature>
<feature type="binding site" evidence="1">
    <location>
        <begin position="315"/>
        <end position="317"/>
    </location>
    <ligand>
        <name>GTP</name>
        <dbReference type="ChEBI" id="CHEBI:37565"/>
    </ligand>
</feature>
<reference key="1">
    <citation type="journal article" date="2000" name="Nucleic Acids Res.">
        <title>Genome sequences of Chlamydia trachomatis MoPn and Chlamydia pneumoniae AR39.</title>
        <authorList>
            <person name="Read T.D."/>
            <person name="Brunham R.C."/>
            <person name="Shen C."/>
            <person name="Gill S.R."/>
            <person name="Heidelberg J.F."/>
            <person name="White O."/>
            <person name="Hickey E.K."/>
            <person name="Peterson J.D."/>
            <person name="Utterback T.R."/>
            <person name="Berry K.J."/>
            <person name="Bass S."/>
            <person name="Linher K.D."/>
            <person name="Weidman J.F."/>
            <person name="Khouri H.M."/>
            <person name="Craven B."/>
            <person name="Bowman C."/>
            <person name="Dodson R.J."/>
            <person name="Gwinn M.L."/>
            <person name="Nelson W.C."/>
            <person name="DeBoy R.T."/>
            <person name="Kolonay J.F."/>
            <person name="McClarty G."/>
            <person name="Salzberg S.L."/>
            <person name="Eisen J.A."/>
            <person name="Fraser C.M."/>
        </authorList>
    </citation>
    <scope>NUCLEOTIDE SEQUENCE [LARGE SCALE GENOMIC DNA]</scope>
    <source>
        <strain>MoPn / Nigg</strain>
    </source>
</reference>
<accession>Q9PJX7</accession>
<proteinExistence type="inferred from homology"/>
<dbReference type="EC" id="3.6.5.-" evidence="1"/>
<dbReference type="EMBL" id="AE002160">
    <property type="protein sequence ID" value="AAF73594.1"/>
    <property type="molecule type" value="Genomic_DNA"/>
</dbReference>
<dbReference type="SMR" id="Q9PJX7"/>
<dbReference type="GeneID" id="1246061"/>
<dbReference type="KEGG" id="cmu:TC_0699"/>
<dbReference type="eggNOG" id="COG0536">
    <property type="taxonomic scope" value="Bacteria"/>
</dbReference>
<dbReference type="HOGENOM" id="CLU_011747_2_3_0"/>
<dbReference type="OrthoDB" id="9807318at2"/>
<dbReference type="Proteomes" id="UP000000800">
    <property type="component" value="Chromosome"/>
</dbReference>
<dbReference type="GO" id="GO:0005737">
    <property type="term" value="C:cytoplasm"/>
    <property type="evidence" value="ECO:0007669"/>
    <property type="project" value="UniProtKB-SubCell"/>
</dbReference>
<dbReference type="GO" id="GO:0005525">
    <property type="term" value="F:GTP binding"/>
    <property type="evidence" value="ECO:0007669"/>
    <property type="project" value="UniProtKB-UniRule"/>
</dbReference>
<dbReference type="GO" id="GO:0003924">
    <property type="term" value="F:GTPase activity"/>
    <property type="evidence" value="ECO:0007669"/>
    <property type="project" value="UniProtKB-UniRule"/>
</dbReference>
<dbReference type="GO" id="GO:0000287">
    <property type="term" value="F:magnesium ion binding"/>
    <property type="evidence" value="ECO:0007669"/>
    <property type="project" value="InterPro"/>
</dbReference>
<dbReference type="GO" id="GO:0042254">
    <property type="term" value="P:ribosome biogenesis"/>
    <property type="evidence" value="ECO:0007669"/>
    <property type="project" value="UniProtKB-UniRule"/>
</dbReference>
<dbReference type="CDD" id="cd01898">
    <property type="entry name" value="Obg"/>
    <property type="match status" value="1"/>
</dbReference>
<dbReference type="FunFam" id="2.70.210.12:FF:000001">
    <property type="entry name" value="GTPase Obg"/>
    <property type="match status" value="1"/>
</dbReference>
<dbReference type="Gene3D" id="2.70.210.12">
    <property type="entry name" value="GTP1/OBG domain"/>
    <property type="match status" value="1"/>
</dbReference>
<dbReference type="Gene3D" id="3.40.50.300">
    <property type="entry name" value="P-loop containing nucleotide triphosphate hydrolases"/>
    <property type="match status" value="1"/>
</dbReference>
<dbReference type="HAMAP" id="MF_01454">
    <property type="entry name" value="GTPase_Obg"/>
    <property type="match status" value="1"/>
</dbReference>
<dbReference type="InterPro" id="IPR031167">
    <property type="entry name" value="G_OBG"/>
</dbReference>
<dbReference type="InterPro" id="IPR006073">
    <property type="entry name" value="GTP-bd"/>
</dbReference>
<dbReference type="InterPro" id="IPR014100">
    <property type="entry name" value="GTP-bd_Obg/CgtA"/>
</dbReference>
<dbReference type="InterPro" id="IPR006169">
    <property type="entry name" value="GTP1_OBG_dom"/>
</dbReference>
<dbReference type="InterPro" id="IPR036726">
    <property type="entry name" value="GTP1_OBG_dom_sf"/>
</dbReference>
<dbReference type="InterPro" id="IPR045086">
    <property type="entry name" value="OBG_GTPase"/>
</dbReference>
<dbReference type="InterPro" id="IPR027417">
    <property type="entry name" value="P-loop_NTPase"/>
</dbReference>
<dbReference type="InterPro" id="IPR005225">
    <property type="entry name" value="Small_GTP-bd"/>
</dbReference>
<dbReference type="NCBIfam" id="TIGR02729">
    <property type="entry name" value="Obg_CgtA"/>
    <property type="match status" value="1"/>
</dbReference>
<dbReference type="NCBIfam" id="NF008955">
    <property type="entry name" value="PRK12297.1"/>
    <property type="match status" value="1"/>
</dbReference>
<dbReference type="NCBIfam" id="NF008956">
    <property type="entry name" value="PRK12299.1"/>
    <property type="match status" value="1"/>
</dbReference>
<dbReference type="NCBIfam" id="TIGR00231">
    <property type="entry name" value="small_GTP"/>
    <property type="match status" value="1"/>
</dbReference>
<dbReference type="PANTHER" id="PTHR11702">
    <property type="entry name" value="DEVELOPMENTALLY REGULATED GTP-BINDING PROTEIN-RELATED"/>
    <property type="match status" value="1"/>
</dbReference>
<dbReference type="PANTHER" id="PTHR11702:SF31">
    <property type="entry name" value="MITOCHONDRIAL RIBOSOME-ASSOCIATED GTPASE 2"/>
    <property type="match status" value="1"/>
</dbReference>
<dbReference type="Pfam" id="PF01018">
    <property type="entry name" value="GTP1_OBG"/>
    <property type="match status" value="1"/>
</dbReference>
<dbReference type="Pfam" id="PF01926">
    <property type="entry name" value="MMR_HSR1"/>
    <property type="match status" value="1"/>
</dbReference>
<dbReference type="PIRSF" id="PIRSF002401">
    <property type="entry name" value="GTP_bd_Obg/CgtA"/>
    <property type="match status" value="1"/>
</dbReference>
<dbReference type="PRINTS" id="PR00326">
    <property type="entry name" value="GTP1OBG"/>
</dbReference>
<dbReference type="SUPFAM" id="SSF82051">
    <property type="entry name" value="Obg GTP-binding protein N-terminal domain"/>
    <property type="match status" value="1"/>
</dbReference>
<dbReference type="SUPFAM" id="SSF52540">
    <property type="entry name" value="P-loop containing nucleoside triphosphate hydrolases"/>
    <property type="match status" value="1"/>
</dbReference>
<dbReference type="PROSITE" id="PS51710">
    <property type="entry name" value="G_OBG"/>
    <property type="match status" value="1"/>
</dbReference>
<dbReference type="PROSITE" id="PS51883">
    <property type="entry name" value="OBG"/>
    <property type="match status" value="1"/>
</dbReference>
<protein>
    <recommendedName>
        <fullName evidence="1">GTPase Obg</fullName>
        <ecNumber evidence="1">3.6.5.-</ecNumber>
    </recommendedName>
    <alternativeName>
        <fullName evidence="1">GTP-binding protein Obg</fullName>
    </alternativeName>
</protein>
<comment type="function">
    <text evidence="1">An essential GTPase which binds GTP, GDP and possibly (p)ppGpp with moderate affinity, with high nucleotide exchange rates and a fairly low GTP hydrolysis rate. Plays a role in control of the cell cycle, stress response, ribosome biogenesis and in those bacteria that undergo differentiation, in morphogenesis control.</text>
</comment>
<comment type="cofactor">
    <cofactor evidence="1">
        <name>Mg(2+)</name>
        <dbReference type="ChEBI" id="CHEBI:18420"/>
    </cofactor>
</comment>
<comment type="subunit">
    <text evidence="1">Monomer.</text>
</comment>
<comment type="subcellular location">
    <subcellularLocation>
        <location evidence="1">Cytoplasm</location>
    </subcellularLocation>
</comment>
<comment type="similarity">
    <text evidence="1">Belongs to the TRAFAC class OBG-HflX-like GTPase superfamily. OBG GTPase family.</text>
</comment>
<evidence type="ECO:0000255" key="1">
    <source>
        <dbReference type="HAMAP-Rule" id="MF_01454"/>
    </source>
</evidence>
<evidence type="ECO:0000255" key="2">
    <source>
        <dbReference type="PROSITE-ProRule" id="PRU01231"/>
    </source>
</evidence>